<protein>
    <recommendedName>
        <fullName evidence="1">Protein GrpE</fullName>
    </recommendedName>
    <alternativeName>
        <fullName evidence="1">HSP-70 cofactor</fullName>
    </alternativeName>
</protein>
<feature type="chain" id="PRO_1000137596" description="Protein GrpE">
    <location>
        <begin position="1"/>
        <end position="237"/>
    </location>
</feature>
<feature type="region of interest" description="Disordered" evidence="2">
    <location>
        <begin position="1"/>
        <end position="52"/>
    </location>
</feature>
<feature type="region of interest" description="Disordered" evidence="2">
    <location>
        <begin position="200"/>
        <end position="237"/>
    </location>
</feature>
<feature type="compositionally biased region" description="Polar residues" evidence="2">
    <location>
        <begin position="27"/>
        <end position="40"/>
    </location>
</feature>
<feature type="compositionally biased region" description="Low complexity" evidence="2">
    <location>
        <begin position="204"/>
        <end position="218"/>
    </location>
</feature>
<keyword id="KW-0143">Chaperone</keyword>
<keyword id="KW-0963">Cytoplasm</keyword>
<keyword id="KW-0346">Stress response</keyword>
<evidence type="ECO:0000255" key="1">
    <source>
        <dbReference type="HAMAP-Rule" id="MF_01151"/>
    </source>
</evidence>
<evidence type="ECO:0000256" key="2">
    <source>
        <dbReference type="SAM" id="MobiDB-lite"/>
    </source>
</evidence>
<dbReference type="EMBL" id="CP000554">
    <property type="protein sequence ID" value="ABM76777.1"/>
    <property type="molecule type" value="Genomic_DNA"/>
</dbReference>
<dbReference type="RefSeq" id="WP_011824710.1">
    <property type="nucleotide sequence ID" value="NC_008820.1"/>
</dbReference>
<dbReference type="SMR" id="A2C5L7"/>
<dbReference type="STRING" id="59922.P9303_00201"/>
<dbReference type="KEGG" id="pmf:P9303_00201"/>
<dbReference type="HOGENOM" id="CLU_057217_5_1_3"/>
<dbReference type="BioCyc" id="PMAR59922:G1G80-21-MONOMER"/>
<dbReference type="Proteomes" id="UP000002274">
    <property type="component" value="Chromosome"/>
</dbReference>
<dbReference type="GO" id="GO:0005737">
    <property type="term" value="C:cytoplasm"/>
    <property type="evidence" value="ECO:0007669"/>
    <property type="project" value="UniProtKB-SubCell"/>
</dbReference>
<dbReference type="GO" id="GO:0000774">
    <property type="term" value="F:adenyl-nucleotide exchange factor activity"/>
    <property type="evidence" value="ECO:0007669"/>
    <property type="project" value="InterPro"/>
</dbReference>
<dbReference type="GO" id="GO:0042803">
    <property type="term" value="F:protein homodimerization activity"/>
    <property type="evidence" value="ECO:0007669"/>
    <property type="project" value="InterPro"/>
</dbReference>
<dbReference type="GO" id="GO:0051087">
    <property type="term" value="F:protein-folding chaperone binding"/>
    <property type="evidence" value="ECO:0007669"/>
    <property type="project" value="InterPro"/>
</dbReference>
<dbReference type="GO" id="GO:0051082">
    <property type="term" value="F:unfolded protein binding"/>
    <property type="evidence" value="ECO:0007669"/>
    <property type="project" value="TreeGrafter"/>
</dbReference>
<dbReference type="GO" id="GO:0006457">
    <property type="term" value="P:protein folding"/>
    <property type="evidence" value="ECO:0007669"/>
    <property type="project" value="InterPro"/>
</dbReference>
<dbReference type="CDD" id="cd00446">
    <property type="entry name" value="GrpE"/>
    <property type="match status" value="1"/>
</dbReference>
<dbReference type="FunFam" id="2.30.22.10:FF:000001">
    <property type="entry name" value="Protein GrpE"/>
    <property type="match status" value="1"/>
</dbReference>
<dbReference type="Gene3D" id="3.90.20.20">
    <property type="match status" value="1"/>
</dbReference>
<dbReference type="Gene3D" id="2.30.22.10">
    <property type="entry name" value="Head domain of nucleotide exchange factor GrpE"/>
    <property type="match status" value="1"/>
</dbReference>
<dbReference type="HAMAP" id="MF_01151">
    <property type="entry name" value="GrpE"/>
    <property type="match status" value="1"/>
</dbReference>
<dbReference type="InterPro" id="IPR000740">
    <property type="entry name" value="GrpE"/>
</dbReference>
<dbReference type="InterPro" id="IPR013805">
    <property type="entry name" value="GrpE_coiled_coil"/>
</dbReference>
<dbReference type="InterPro" id="IPR009012">
    <property type="entry name" value="GrpE_head"/>
</dbReference>
<dbReference type="NCBIfam" id="NF010741">
    <property type="entry name" value="PRK14143.1"/>
    <property type="match status" value="1"/>
</dbReference>
<dbReference type="PANTHER" id="PTHR21237">
    <property type="entry name" value="GRPE PROTEIN"/>
    <property type="match status" value="1"/>
</dbReference>
<dbReference type="PANTHER" id="PTHR21237:SF23">
    <property type="entry name" value="GRPE PROTEIN HOMOLOG, MITOCHONDRIAL"/>
    <property type="match status" value="1"/>
</dbReference>
<dbReference type="Pfam" id="PF01025">
    <property type="entry name" value="GrpE"/>
    <property type="match status" value="1"/>
</dbReference>
<dbReference type="PRINTS" id="PR00773">
    <property type="entry name" value="GRPEPROTEIN"/>
</dbReference>
<dbReference type="SUPFAM" id="SSF58014">
    <property type="entry name" value="Coiled-coil domain of nucleotide exchange factor GrpE"/>
    <property type="match status" value="1"/>
</dbReference>
<dbReference type="SUPFAM" id="SSF51064">
    <property type="entry name" value="Head domain of nucleotide exchange factor GrpE"/>
    <property type="match status" value="1"/>
</dbReference>
<dbReference type="PROSITE" id="PS01071">
    <property type="entry name" value="GRPE"/>
    <property type="match status" value="1"/>
</dbReference>
<reference key="1">
    <citation type="journal article" date="2007" name="PLoS Genet.">
        <title>Patterns and implications of gene gain and loss in the evolution of Prochlorococcus.</title>
        <authorList>
            <person name="Kettler G.C."/>
            <person name="Martiny A.C."/>
            <person name="Huang K."/>
            <person name="Zucker J."/>
            <person name="Coleman M.L."/>
            <person name="Rodrigue S."/>
            <person name="Chen F."/>
            <person name="Lapidus A."/>
            <person name="Ferriera S."/>
            <person name="Johnson J."/>
            <person name="Steglich C."/>
            <person name="Church G.M."/>
            <person name="Richardson P."/>
            <person name="Chisholm S.W."/>
        </authorList>
    </citation>
    <scope>NUCLEOTIDE SEQUENCE [LARGE SCALE GENOMIC DNA]</scope>
    <source>
        <strain>MIT 9303</strain>
    </source>
</reference>
<comment type="function">
    <text evidence="1">Participates actively in the response to hyperosmotic and heat shock by preventing the aggregation of stress-denatured proteins, in association with DnaK and GrpE. It is the nucleotide exchange factor for DnaK and may function as a thermosensor. Unfolded proteins bind initially to DnaJ; upon interaction with the DnaJ-bound protein, DnaK hydrolyzes its bound ATP, resulting in the formation of a stable complex. GrpE releases ADP from DnaK; ATP binding to DnaK triggers the release of the substrate protein, thus completing the reaction cycle. Several rounds of ATP-dependent interactions between DnaJ, DnaK and GrpE are required for fully efficient folding.</text>
</comment>
<comment type="subunit">
    <text evidence="1">Homodimer.</text>
</comment>
<comment type="subcellular location">
    <subcellularLocation>
        <location evidence="1">Cytoplasm</location>
    </subcellularLocation>
</comment>
<comment type="similarity">
    <text evidence="1">Belongs to the GrpE family.</text>
</comment>
<sequence>MSGDAPTPAHDPAAEGLEASVPLESVASMNSDEGQPSAQSAPLADNEARLQQLEQEHSSLREEHETLRSQYMRIAADFDNFRKRQSRDQDDLRLQLICTTLSEILPVVDNFERARQQLEPQGEEAQALHRSYQGLYKQLVEVLKQLGVASMRVVGQAFDPTLHEAVSREPSEEHPEDVVTEELQRGYHLNGRVLRHALVKVSMGPGPQSGASPSSAQSNDDSTATFQGEADPAEPGV</sequence>
<name>GRPE_PROM3</name>
<accession>A2C5L7</accession>
<proteinExistence type="inferred from homology"/>
<gene>
    <name evidence="1" type="primary">grpE</name>
    <name type="ordered locus">P9303_00201</name>
</gene>
<organism>
    <name type="scientific">Prochlorococcus marinus (strain MIT 9303)</name>
    <dbReference type="NCBI Taxonomy" id="59922"/>
    <lineage>
        <taxon>Bacteria</taxon>
        <taxon>Bacillati</taxon>
        <taxon>Cyanobacteriota</taxon>
        <taxon>Cyanophyceae</taxon>
        <taxon>Synechococcales</taxon>
        <taxon>Prochlorococcaceae</taxon>
        <taxon>Prochlorococcus</taxon>
    </lineage>
</organism>